<proteinExistence type="inferred from homology"/>
<gene>
    <name evidence="1" type="primary">atpA</name>
    <name type="ordered locus">Ctha_0873</name>
</gene>
<comment type="function">
    <text evidence="1">Produces ATP from ADP in the presence of a proton gradient across the membrane. The alpha chain is a regulatory subunit.</text>
</comment>
<comment type="catalytic activity">
    <reaction evidence="1">
        <text>ATP + H2O + 4 H(+)(in) = ADP + phosphate + 5 H(+)(out)</text>
        <dbReference type="Rhea" id="RHEA:57720"/>
        <dbReference type="ChEBI" id="CHEBI:15377"/>
        <dbReference type="ChEBI" id="CHEBI:15378"/>
        <dbReference type="ChEBI" id="CHEBI:30616"/>
        <dbReference type="ChEBI" id="CHEBI:43474"/>
        <dbReference type="ChEBI" id="CHEBI:456216"/>
        <dbReference type="EC" id="7.1.2.2"/>
    </reaction>
</comment>
<comment type="subunit">
    <text evidence="1">F-type ATPases have 2 components, CF(1) - the catalytic core - and CF(0) - the membrane proton channel. CF(1) has five subunits: alpha(3), beta(3), gamma(1), delta(1), epsilon(1). CF(0) has four main subunits: a, b, b' and c.</text>
</comment>
<comment type="subcellular location">
    <subcellularLocation>
        <location evidence="1">Cell inner membrane</location>
        <topology evidence="1">Peripheral membrane protein</topology>
    </subcellularLocation>
</comment>
<comment type="similarity">
    <text evidence="1">Belongs to the ATPase alpha/beta chains family.</text>
</comment>
<organism>
    <name type="scientific">Chloroherpeton thalassium (strain ATCC 35110 / GB-78)</name>
    <dbReference type="NCBI Taxonomy" id="517418"/>
    <lineage>
        <taxon>Bacteria</taxon>
        <taxon>Pseudomonadati</taxon>
        <taxon>Chlorobiota</taxon>
        <taxon>Chlorobiia</taxon>
        <taxon>Chlorobiales</taxon>
        <taxon>Chloroherpetonaceae</taxon>
        <taxon>Chloroherpeton</taxon>
    </lineage>
</organism>
<accession>B3QWX7</accession>
<evidence type="ECO:0000255" key="1">
    <source>
        <dbReference type="HAMAP-Rule" id="MF_01346"/>
    </source>
</evidence>
<sequence length="537" mass="58157">MSTAVRPDEISAILRKQLSGFDSEVDVYDVGTVLQVGDGIARIYGLSKVAAGELVEFPHNVTGMVLNLEEDNVGAVLFGSSDLIKEGDTVKRTKILASIPVGEAMLGRVINPLGEPIDGKGAIKTEIRLPLERRAPGVIFRHPVKEPLQTGLKAIDSMIPIGRGQRELIIGDRQTGKTAVAIDTIINQKASHTKEAQEKGAKPVYCIYVATGQKASTVAQVVNILEKHGAMEYTTVISATASDPAPLQFISPYAGATLGEYFRDTGRHALVIYDDLSKQAVAYRQVSLLLRRPPGREAYPGDVFYLHSRLLERAARITNDDALAKQMNDLPDSIKPMAKGGGSLTALPIIETQAGDVSAYIPTNVISITDGQIFLESNLFNSGQRPAINVGISVSRVGGSAQIKGMKKVAGTLRLDLAQYRELEAFAKFGSDLDKATQAQLTRGGRLVEILKQGQYVPMAVEKQVAILFVGTQGILDTLPANLVRKFEVAFLEMLELKHKDILNTIATAGQMDADTQKKLRQVAEQFLETFKQANVK</sequence>
<feature type="chain" id="PRO_1000143355" description="ATP synthase subunit alpha">
    <location>
        <begin position="1"/>
        <end position="537"/>
    </location>
</feature>
<feature type="binding site" evidence="1">
    <location>
        <begin position="171"/>
        <end position="178"/>
    </location>
    <ligand>
        <name>ATP</name>
        <dbReference type="ChEBI" id="CHEBI:30616"/>
    </ligand>
</feature>
<feature type="site" description="Required for activity" evidence="1">
    <location>
        <position position="393"/>
    </location>
</feature>
<name>ATPA_CHLT3</name>
<protein>
    <recommendedName>
        <fullName evidence="1">ATP synthase subunit alpha</fullName>
        <ecNumber evidence="1">7.1.2.2</ecNumber>
    </recommendedName>
    <alternativeName>
        <fullName evidence="1">ATP synthase F1 sector subunit alpha</fullName>
    </alternativeName>
    <alternativeName>
        <fullName evidence="1">F-ATPase subunit alpha</fullName>
    </alternativeName>
</protein>
<keyword id="KW-0066">ATP synthesis</keyword>
<keyword id="KW-0067">ATP-binding</keyword>
<keyword id="KW-0997">Cell inner membrane</keyword>
<keyword id="KW-1003">Cell membrane</keyword>
<keyword id="KW-0139">CF(1)</keyword>
<keyword id="KW-0375">Hydrogen ion transport</keyword>
<keyword id="KW-0406">Ion transport</keyword>
<keyword id="KW-0472">Membrane</keyword>
<keyword id="KW-0547">Nucleotide-binding</keyword>
<keyword id="KW-1185">Reference proteome</keyword>
<keyword id="KW-1278">Translocase</keyword>
<keyword id="KW-0813">Transport</keyword>
<reference key="1">
    <citation type="submission" date="2008-06" db="EMBL/GenBank/DDBJ databases">
        <title>Complete sequence of Chloroherpeton thalassium ATCC 35110.</title>
        <authorList>
            <consortium name="US DOE Joint Genome Institute"/>
            <person name="Lucas S."/>
            <person name="Copeland A."/>
            <person name="Lapidus A."/>
            <person name="Glavina del Rio T."/>
            <person name="Dalin E."/>
            <person name="Tice H."/>
            <person name="Bruce D."/>
            <person name="Goodwin L."/>
            <person name="Pitluck S."/>
            <person name="Schmutz J."/>
            <person name="Larimer F."/>
            <person name="Land M."/>
            <person name="Hauser L."/>
            <person name="Kyrpides N."/>
            <person name="Mikhailova N."/>
            <person name="Liu Z."/>
            <person name="Li T."/>
            <person name="Zhao F."/>
            <person name="Overmann J."/>
            <person name="Bryant D.A."/>
            <person name="Richardson P."/>
        </authorList>
    </citation>
    <scope>NUCLEOTIDE SEQUENCE [LARGE SCALE GENOMIC DNA]</scope>
    <source>
        <strain>ATCC 35110 / GB-78</strain>
    </source>
</reference>
<dbReference type="EC" id="7.1.2.2" evidence="1"/>
<dbReference type="EMBL" id="CP001100">
    <property type="protein sequence ID" value="ACF13341.1"/>
    <property type="molecule type" value="Genomic_DNA"/>
</dbReference>
<dbReference type="RefSeq" id="WP_012499425.1">
    <property type="nucleotide sequence ID" value="NC_011026.1"/>
</dbReference>
<dbReference type="SMR" id="B3QWX7"/>
<dbReference type="STRING" id="517418.Ctha_0873"/>
<dbReference type="KEGG" id="cts:Ctha_0873"/>
<dbReference type="eggNOG" id="COG0056">
    <property type="taxonomic scope" value="Bacteria"/>
</dbReference>
<dbReference type="HOGENOM" id="CLU_010091_2_1_10"/>
<dbReference type="OrthoDB" id="9803053at2"/>
<dbReference type="Proteomes" id="UP000001208">
    <property type="component" value="Chromosome"/>
</dbReference>
<dbReference type="GO" id="GO:0005886">
    <property type="term" value="C:plasma membrane"/>
    <property type="evidence" value="ECO:0007669"/>
    <property type="project" value="UniProtKB-SubCell"/>
</dbReference>
<dbReference type="GO" id="GO:0045259">
    <property type="term" value="C:proton-transporting ATP synthase complex"/>
    <property type="evidence" value="ECO:0007669"/>
    <property type="project" value="UniProtKB-KW"/>
</dbReference>
<dbReference type="GO" id="GO:0043531">
    <property type="term" value="F:ADP binding"/>
    <property type="evidence" value="ECO:0007669"/>
    <property type="project" value="TreeGrafter"/>
</dbReference>
<dbReference type="GO" id="GO:0005524">
    <property type="term" value="F:ATP binding"/>
    <property type="evidence" value="ECO:0007669"/>
    <property type="project" value="UniProtKB-UniRule"/>
</dbReference>
<dbReference type="GO" id="GO:0046933">
    <property type="term" value="F:proton-transporting ATP synthase activity, rotational mechanism"/>
    <property type="evidence" value="ECO:0007669"/>
    <property type="project" value="UniProtKB-UniRule"/>
</dbReference>
<dbReference type="CDD" id="cd18113">
    <property type="entry name" value="ATP-synt_F1_alpha_C"/>
    <property type="match status" value="1"/>
</dbReference>
<dbReference type="CDD" id="cd18116">
    <property type="entry name" value="ATP-synt_F1_alpha_N"/>
    <property type="match status" value="1"/>
</dbReference>
<dbReference type="CDD" id="cd01132">
    <property type="entry name" value="F1-ATPase_alpha_CD"/>
    <property type="match status" value="1"/>
</dbReference>
<dbReference type="FunFam" id="1.20.150.20:FF:000001">
    <property type="entry name" value="ATP synthase subunit alpha"/>
    <property type="match status" value="1"/>
</dbReference>
<dbReference type="FunFam" id="2.40.30.20:FF:000001">
    <property type="entry name" value="ATP synthase subunit alpha"/>
    <property type="match status" value="1"/>
</dbReference>
<dbReference type="FunFam" id="3.40.50.300:FF:000002">
    <property type="entry name" value="ATP synthase subunit alpha"/>
    <property type="match status" value="1"/>
</dbReference>
<dbReference type="Gene3D" id="2.40.30.20">
    <property type="match status" value="1"/>
</dbReference>
<dbReference type="Gene3D" id="1.20.150.20">
    <property type="entry name" value="ATP synthase alpha/beta chain, C-terminal domain"/>
    <property type="match status" value="1"/>
</dbReference>
<dbReference type="Gene3D" id="3.40.50.300">
    <property type="entry name" value="P-loop containing nucleotide triphosphate hydrolases"/>
    <property type="match status" value="1"/>
</dbReference>
<dbReference type="HAMAP" id="MF_01346">
    <property type="entry name" value="ATP_synth_alpha_bact"/>
    <property type="match status" value="1"/>
</dbReference>
<dbReference type="InterPro" id="IPR023366">
    <property type="entry name" value="ATP_synth_asu-like_sf"/>
</dbReference>
<dbReference type="InterPro" id="IPR000793">
    <property type="entry name" value="ATP_synth_asu_C"/>
</dbReference>
<dbReference type="InterPro" id="IPR038376">
    <property type="entry name" value="ATP_synth_asu_C_sf"/>
</dbReference>
<dbReference type="InterPro" id="IPR033732">
    <property type="entry name" value="ATP_synth_F1_a_nt-bd_dom"/>
</dbReference>
<dbReference type="InterPro" id="IPR005294">
    <property type="entry name" value="ATP_synth_F1_asu"/>
</dbReference>
<dbReference type="InterPro" id="IPR020003">
    <property type="entry name" value="ATPase_a/bsu_AS"/>
</dbReference>
<dbReference type="InterPro" id="IPR004100">
    <property type="entry name" value="ATPase_F1/V1/A1_a/bsu_N"/>
</dbReference>
<dbReference type="InterPro" id="IPR036121">
    <property type="entry name" value="ATPase_F1/V1/A1_a/bsu_N_sf"/>
</dbReference>
<dbReference type="InterPro" id="IPR000194">
    <property type="entry name" value="ATPase_F1/V1/A1_a/bsu_nucl-bd"/>
</dbReference>
<dbReference type="InterPro" id="IPR027417">
    <property type="entry name" value="P-loop_NTPase"/>
</dbReference>
<dbReference type="NCBIfam" id="TIGR00962">
    <property type="entry name" value="atpA"/>
    <property type="match status" value="1"/>
</dbReference>
<dbReference type="NCBIfam" id="NF009884">
    <property type="entry name" value="PRK13343.1"/>
    <property type="match status" value="1"/>
</dbReference>
<dbReference type="PANTHER" id="PTHR48082">
    <property type="entry name" value="ATP SYNTHASE SUBUNIT ALPHA, MITOCHONDRIAL"/>
    <property type="match status" value="1"/>
</dbReference>
<dbReference type="PANTHER" id="PTHR48082:SF2">
    <property type="entry name" value="ATP SYNTHASE SUBUNIT ALPHA, MITOCHONDRIAL"/>
    <property type="match status" value="1"/>
</dbReference>
<dbReference type="Pfam" id="PF00006">
    <property type="entry name" value="ATP-synt_ab"/>
    <property type="match status" value="1"/>
</dbReference>
<dbReference type="Pfam" id="PF00306">
    <property type="entry name" value="ATP-synt_ab_C"/>
    <property type="match status" value="1"/>
</dbReference>
<dbReference type="Pfam" id="PF02874">
    <property type="entry name" value="ATP-synt_ab_N"/>
    <property type="match status" value="1"/>
</dbReference>
<dbReference type="PIRSF" id="PIRSF039088">
    <property type="entry name" value="F_ATPase_subunit_alpha"/>
    <property type="match status" value="1"/>
</dbReference>
<dbReference type="SUPFAM" id="SSF47917">
    <property type="entry name" value="C-terminal domain of alpha and beta subunits of F1 ATP synthase"/>
    <property type="match status" value="1"/>
</dbReference>
<dbReference type="SUPFAM" id="SSF50615">
    <property type="entry name" value="N-terminal domain of alpha and beta subunits of F1 ATP synthase"/>
    <property type="match status" value="1"/>
</dbReference>
<dbReference type="SUPFAM" id="SSF52540">
    <property type="entry name" value="P-loop containing nucleoside triphosphate hydrolases"/>
    <property type="match status" value="1"/>
</dbReference>
<dbReference type="PROSITE" id="PS00152">
    <property type="entry name" value="ATPASE_ALPHA_BETA"/>
    <property type="match status" value="1"/>
</dbReference>